<feature type="chain" id="PRO_0000413974" description="1,4-alpha-glucan branching enzyme TTHA1902">
    <location>
        <begin position="1"/>
        <end position="520"/>
    </location>
</feature>
<feature type="active site" description="Nucleophile">
    <location>
        <position position="184"/>
    </location>
</feature>
<feature type="active site" description="Proton donor">
    <location>
        <position position="353"/>
    </location>
</feature>
<feature type="binding site" evidence="1">
    <location>
        <position position="265"/>
    </location>
    <ligand>
        <name>substrate</name>
    </ligand>
</feature>
<feature type="binding site" evidence="1">
    <location>
        <position position="282"/>
    </location>
    <ligand>
        <name>substrate</name>
    </ligand>
</feature>
<feature type="binding site" evidence="1">
    <location>
        <position position="404"/>
    </location>
    <ligand>
        <name>substrate</name>
    </ligand>
</feature>
<feature type="binding site" evidence="1">
    <location>
        <position position="460"/>
    </location>
    <ligand>
        <name>substrate</name>
    </ligand>
</feature>
<feature type="binding site" evidence="1">
    <location>
        <position position="469"/>
    </location>
    <ligand>
        <name>substrate</name>
    </ligand>
</feature>
<feature type="site" description="Transition state stabilizer" evidence="1">
    <location>
        <position position="236"/>
    </location>
</feature>
<feature type="mutagenesis site" description="Nearly no effect on enzymatic activity." evidence="2">
    <original>F</original>
    <variation>A</variation>
    <location>
        <position position="23"/>
    </location>
</feature>
<feature type="mutagenesis site" description="Complete loss of enzymatic activity. Binds amylose but not glycogen." evidence="2">
    <original>E</original>
    <variation>A</variation>
    <location>
        <position position="184"/>
    </location>
</feature>
<feature type="mutagenesis site" description="Almost complete loss of branching activity but 10-fold increase in hydrolytic activity." evidence="2">
    <original>Y</original>
    <variation>A</variation>
    <location>
        <position position="236"/>
    </location>
</feature>
<feature type="mutagenesis site" description="Nearly no effect on enzymatic activity." evidence="2">
    <original>L</original>
    <variation>A</variation>
    <location>
        <position position="271"/>
    </location>
</feature>
<feature type="mutagenesis site" description="0.4% of wild-type enzymatic activity." evidence="2">
    <original>W</original>
    <variation>A</variation>
    <location>
        <position position="274"/>
    </location>
</feature>
<feature type="mutagenesis site" description="Complete loss of enzymatic activity." evidence="2">
    <original>D</original>
    <variation>A</variation>
    <location>
        <position position="353"/>
    </location>
</feature>
<feature type="mutagenesis site" description="0.6% of wild-type enzymatic activity." evidence="2">
    <original>W</original>
    <variation>A</variation>
    <location>
        <position position="360"/>
    </location>
</feature>
<feature type="mutagenesis site" description="0.4% of wild-type enzymatic activity." evidence="2">
    <original>W</original>
    <variation>A</variation>
    <location>
        <position position="404"/>
    </location>
</feature>
<feature type="mutagenesis site" description="0.5% of wild-type enzymatic activity." evidence="2">
    <original>F</original>
    <variation>A</variation>
    <location>
        <position position="463"/>
    </location>
</feature>
<feature type="strand" evidence="4">
    <location>
        <begin position="2"/>
        <end position="10"/>
    </location>
</feature>
<feature type="strand" evidence="4">
    <location>
        <begin position="20"/>
        <end position="24"/>
    </location>
</feature>
<feature type="helix" evidence="4">
    <location>
        <begin position="25"/>
        <end position="34"/>
    </location>
</feature>
<feature type="helix" evidence="4">
    <location>
        <begin position="36"/>
        <end position="49"/>
    </location>
</feature>
<feature type="strand" evidence="4">
    <location>
        <begin position="55"/>
        <end position="59"/>
    </location>
</feature>
<feature type="helix" evidence="4">
    <location>
        <begin position="61"/>
        <end position="67"/>
    </location>
</feature>
<feature type="helix" evidence="4">
    <location>
        <begin position="70"/>
        <end position="94"/>
    </location>
</feature>
<feature type="helix" evidence="4">
    <location>
        <begin position="100"/>
        <end position="119"/>
    </location>
</feature>
<feature type="turn" evidence="4">
    <location>
        <begin position="120"/>
        <end position="122"/>
    </location>
</feature>
<feature type="helix" evidence="4">
    <location>
        <begin position="124"/>
        <end position="133"/>
    </location>
</feature>
<feature type="strand" evidence="4">
    <location>
        <begin position="136"/>
        <end position="142"/>
    </location>
</feature>
<feature type="helix" evidence="4">
    <location>
        <begin position="149"/>
        <end position="151"/>
    </location>
</feature>
<feature type="helix" evidence="4">
    <location>
        <begin position="155"/>
        <end position="173"/>
    </location>
</feature>
<feature type="strand" evidence="4">
    <location>
        <begin position="179"/>
        <end position="181"/>
    </location>
</feature>
<feature type="helix" evidence="4">
    <location>
        <begin position="183"/>
        <end position="185"/>
    </location>
</feature>
<feature type="strand" evidence="4">
    <location>
        <begin position="190"/>
        <end position="193"/>
    </location>
</feature>
<feature type="strand" evidence="4">
    <location>
        <begin position="196"/>
        <end position="198"/>
    </location>
</feature>
<feature type="strand" evidence="4">
    <location>
        <begin position="203"/>
        <end position="205"/>
    </location>
</feature>
<feature type="helix" evidence="4">
    <location>
        <begin position="208"/>
        <end position="214"/>
    </location>
</feature>
<feature type="strand" evidence="4">
    <location>
        <begin position="219"/>
        <end position="222"/>
    </location>
</feature>
<feature type="helix" evidence="4">
    <location>
        <begin position="225"/>
        <end position="228"/>
    </location>
</feature>
<feature type="helix" evidence="4">
    <location>
        <begin position="248"/>
        <end position="251"/>
    </location>
</feature>
<feature type="strand" evidence="4">
    <location>
        <begin position="252"/>
        <end position="255"/>
    </location>
</feature>
<feature type="strand" evidence="4">
    <location>
        <begin position="261"/>
        <end position="265"/>
    </location>
</feature>
<feature type="helix" evidence="4">
    <location>
        <begin position="267"/>
        <end position="274"/>
    </location>
</feature>
<feature type="turn" evidence="4">
    <location>
        <begin position="276"/>
        <end position="278"/>
    </location>
</feature>
<feature type="helix" evidence="4">
    <location>
        <begin position="280"/>
        <end position="282"/>
    </location>
</feature>
<feature type="turn" evidence="4">
    <location>
        <begin position="294"/>
        <end position="296"/>
    </location>
</feature>
<feature type="helix" evidence="4">
    <location>
        <begin position="310"/>
        <end position="312"/>
    </location>
</feature>
<feature type="helix" evidence="4">
    <location>
        <begin position="318"/>
        <end position="342"/>
    </location>
</feature>
<feature type="strand" evidence="4">
    <location>
        <begin position="347"/>
        <end position="353"/>
    </location>
</feature>
<feature type="helix" evidence="4">
    <location>
        <begin position="354"/>
        <end position="356"/>
    </location>
</feature>
<feature type="turn" evidence="4">
    <location>
        <begin position="358"/>
        <end position="360"/>
    </location>
</feature>
<feature type="helix" evidence="4">
    <location>
        <begin position="364"/>
        <end position="375"/>
    </location>
</feature>
<feature type="strand" evidence="4">
    <location>
        <begin position="379"/>
        <end position="383"/>
    </location>
</feature>
<feature type="helix" evidence="4">
    <location>
        <begin position="386"/>
        <end position="389"/>
    </location>
</feature>
<feature type="strand" evidence="4">
    <location>
        <begin position="394"/>
        <end position="396"/>
    </location>
</feature>
<feature type="helix" evidence="4">
    <location>
        <begin position="406"/>
        <end position="408"/>
    </location>
</feature>
<feature type="turn" evidence="4">
    <location>
        <begin position="411"/>
        <end position="413"/>
    </location>
</feature>
<feature type="helix" evidence="4">
    <location>
        <begin position="416"/>
        <end position="418"/>
    </location>
</feature>
<feature type="helix" evidence="4">
    <location>
        <begin position="419"/>
        <end position="438"/>
    </location>
</feature>
<feature type="helix" evidence="4">
    <location>
        <begin position="443"/>
        <end position="456"/>
    </location>
</feature>
<feature type="helix" evidence="4">
    <location>
        <begin position="460"/>
        <end position="463"/>
    </location>
</feature>
<feature type="turn" evidence="4">
    <location>
        <begin position="464"/>
        <end position="466"/>
    </location>
</feature>
<feature type="turn" evidence="4">
    <location>
        <begin position="468"/>
        <end position="470"/>
    </location>
</feature>
<feature type="helix" evidence="4">
    <location>
        <begin position="471"/>
        <end position="490"/>
    </location>
</feature>
<feature type="helix" evidence="4">
    <location>
        <begin position="494"/>
        <end position="503"/>
    </location>
</feature>
<feature type="helix" evidence="4">
    <location>
        <begin position="512"/>
        <end position="516"/>
    </location>
</feature>
<gene>
    <name type="ordered locus">TTHA1902</name>
    <name type="ORF">TT1467</name>
</gene>
<proteinExistence type="evidence at protein level"/>
<dbReference type="EC" id="2.4.1.18"/>
<dbReference type="EMBL" id="AP008226">
    <property type="protein sequence ID" value="BAD71725.1"/>
    <property type="molecule type" value="Genomic_DNA"/>
</dbReference>
<dbReference type="RefSeq" id="WP_011228999.1">
    <property type="nucleotide sequence ID" value="NC_006461.1"/>
</dbReference>
<dbReference type="RefSeq" id="YP_145168.1">
    <property type="nucleotide sequence ID" value="NC_006461.1"/>
</dbReference>
<dbReference type="PDB" id="1UFA">
    <property type="method" value="X-ray"/>
    <property type="resolution" value="2.20 A"/>
    <property type="chains" value="A=1-520"/>
</dbReference>
<dbReference type="PDB" id="3P0B">
    <property type="method" value="X-ray"/>
    <property type="resolution" value="1.35 A"/>
    <property type="chains" value="A=1-520"/>
</dbReference>
<dbReference type="PDBsum" id="1UFA"/>
<dbReference type="PDBsum" id="3P0B"/>
<dbReference type="SMR" id="Q5SH28"/>
<dbReference type="CAZy" id="GH57">
    <property type="family name" value="Glycoside Hydrolase Family 57"/>
</dbReference>
<dbReference type="EnsemblBacteria" id="BAD71725">
    <property type="protein sequence ID" value="BAD71725"/>
    <property type="gene ID" value="BAD71725"/>
</dbReference>
<dbReference type="GeneID" id="3167991"/>
<dbReference type="KEGG" id="ttj:TTHA1902"/>
<dbReference type="PATRIC" id="fig|300852.9.peg.1870"/>
<dbReference type="eggNOG" id="COG1543">
    <property type="taxonomic scope" value="Bacteria"/>
</dbReference>
<dbReference type="HOGENOM" id="CLU_008192_1_0_0"/>
<dbReference type="PhylomeDB" id="Q5SH28"/>
<dbReference type="UniPathway" id="UPA00164"/>
<dbReference type="EvolutionaryTrace" id="Q5SH28"/>
<dbReference type="Proteomes" id="UP000000532">
    <property type="component" value="Chromosome"/>
</dbReference>
<dbReference type="GO" id="GO:0005576">
    <property type="term" value="C:extracellular region"/>
    <property type="evidence" value="ECO:0007669"/>
    <property type="project" value="TreeGrafter"/>
</dbReference>
<dbReference type="GO" id="GO:0003844">
    <property type="term" value="F:1,4-alpha-glucan branching enzyme activity"/>
    <property type="evidence" value="ECO:0000314"/>
    <property type="project" value="UniProtKB"/>
</dbReference>
<dbReference type="GO" id="GO:0030979">
    <property type="term" value="P:alpha-glucan biosynthetic process"/>
    <property type="evidence" value="ECO:0007669"/>
    <property type="project" value="InterPro"/>
</dbReference>
<dbReference type="GO" id="GO:0005978">
    <property type="term" value="P:glycogen biosynthetic process"/>
    <property type="evidence" value="ECO:0000314"/>
    <property type="project" value="UniProtKB"/>
</dbReference>
<dbReference type="CDD" id="cd10816">
    <property type="entry name" value="GH57N_BE_TK1436_like"/>
    <property type="match status" value="1"/>
</dbReference>
<dbReference type="FunFam" id="3.20.110.10:FF:000009">
    <property type="entry name" value="1,4-alpha-glucan branching enzyme TK1436"/>
    <property type="match status" value="1"/>
</dbReference>
<dbReference type="Gene3D" id="1.20.1430.10">
    <property type="entry name" value="Families 57/38 glycoside transferase, middle domain"/>
    <property type="match status" value="1"/>
</dbReference>
<dbReference type="Gene3D" id="3.20.110.10">
    <property type="entry name" value="Glycoside hydrolase 38, N terminal domain"/>
    <property type="match status" value="1"/>
</dbReference>
<dbReference type="InterPro" id="IPR037090">
    <property type="entry name" value="57_glycoside_trans_central"/>
</dbReference>
<dbReference type="InterPro" id="IPR015293">
    <property type="entry name" value="BE_C"/>
</dbReference>
<dbReference type="InterPro" id="IPR040042">
    <property type="entry name" value="Branching_enz_MT3115-like"/>
</dbReference>
<dbReference type="InterPro" id="IPR011330">
    <property type="entry name" value="Glyco_hydro/deAcase_b/a-brl"/>
</dbReference>
<dbReference type="InterPro" id="IPR027291">
    <property type="entry name" value="Glyco_hydro_38_N_sf"/>
</dbReference>
<dbReference type="InterPro" id="IPR028995">
    <property type="entry name" value="Glyco_hydro_57/38_cen_sf"/>
</dbReference>
<dbReference type="InterPro" id="IPR004300">
    <property type="entry name" value="Glyco_hydro_57_N"/>
</dbReference>
<dbReference type="InterPro" id="IPR048145">
    <property type="entry name" value="TTHA1902"/>
</dbReference>
<dbReference type="NCBIfam" id="NF041566">
    <property type="entry name" value="branchenz_Thermus"/>
    <property type="match status" value="1"/>
</dbReference>
<dbReference type="PANTHER" id="PTHR41695">
    <property type="entry name" value="1,4-ALPHA-GLUCAN BRANCHING ENZYME RV3031-RELATED"/>
    <property type="match status" value="1"/>
</dbReference>
<dbReference type="PANTHER" id="PTHR41695:SF1">
    <property type="entry name" value="1,4-ALPHA-GLUCAN BRANCHING ENZYME TK1436"/>
    <property type="match status" value="1"/>
</dbReference>
<dbReference type="Pfam" id="PF09210">
    <property type="entry name" value="BE_C"/>
    <property type="match status" value="1"/>
</dbReference>
<dbReference type="Pfam" id="PF03065">
    <property type="entry name" value="Glyco_hydro_57"/>
    <property type="match status" value="1"/>
</dbReference>
<dbReference type="SUPFAM" id="SSF88688">
    <property type="entry name" value="Families 57/38 glycoside transferase middle domain"/>
    <property type="match status" value="1"/>
</dbReference>
<dbReference type="SUPFAM" id="SSF88713">
    <property type="entry name" value="Glycoside hydrolase/deacetylase"/>
    <property type="match status" value="1"/>
</dbReference>
<organism>
    <name type="scientific">Thermus thermophilus (strain ATCC 27634 / DSM 579 / HB8)</name>
    <dbReference type="NCBI Taxonomy" id="300852"/>
    <lineage>
        <taxon>Bacteria</taxon>
        <taxon>Thermotogati</taxon>
        <taxon>Deinococcota</taxon>
        <taxon>Deinococci</taxon>
        <taxon>Thermales</taxon>
        <taxon>Thermaceae</taxon>
        <taxon>Thermus</taxon>
    </lineage>
</organism>
<keyword id="KW-0002">3D-structure</keyword>
<keyword id="KW-0119">Carbohydrate metabolism</keyword>
<keyword id="KW-0320">Glycogen biosynthesis</keyword>
<keyword id="KW-0321">Glycogen metabolism</keyword>
<keyword id="KW-0328">Glycosyltransferase</keyword>
<keyword id="KW-1185">Reference proteome</keyword>
<keyword id="KW-0808">Transferase</keyword>
<comment type="function">
    <text evidence="2">Catalyzes the formation of branch points in alpha-glucans by cleavage of an alpha-1,4 glycosidic bond and subsequent transfer of the cleaved-off oligosaccharide to a new alpha-1,6 position. The branch chain-length distribution of the reaction products shows degree of polymerization (DP) of 3 to 13, with two local maxima at DP 7 and DP 11. Exhibits an alpha-retaining catalytic mechanism. Is involved in glycogen biosynthesis. Shows a secondary activity, i.e. the hydrolysis of the substrate, being 4% of the total activity. Can use amylose as substrate but not alpha-1,4-linked oligosaccharides of 2-7 glucose residues, beta-cyclodextrin, 6-O-glucosyl-beta-cyclodextrin and 6-O-maltosyl-beta-cyclodextrin. Is not able to branch amylopectin further, it only hydrolyzes amylopectin. Thus, displays preference for linear and long substrates (amylose) over branched structures (amylopectin).</text>
</comment>
<comment type="catalytic activity">
    <reaction evidence="2">
        <text>Transfers a segment of a (1-&gt;4)-alpha-D-glucan chain to a primary hydroxy group in a similar glucan chain.</text>
        <dbReference type="EC" id="2.4.1.18"/>
    </reaction>
</comment>
<comment type="biophysicochemical properties">
    <phDependence>
        <text evidence="2">Optimum pH is 6.5.</text>
    </phDependence>
    <temperatureDependence>
        <text evidence="2">Optimum temperature is 65 degrees Celsius. Remains fully active following incubation for 1 hour at 80 degrees Celsius.</text>
    </temperatureDependence>
</comment>
<comment type="pathway">
    <text evidence="2">Glycan biosynthesis; glycogen biosynthesis.</text>
</comment>
<comment type="similarity">
    <text evidence="3">Belongs to the glycosyl hydrolase 57 family.</text>
</comment>
<name>BE_THET8</name>
<reference key="1">
    <citation type="submission" date="2004-11" db="EMBL/GenBank/DDBJ databases">
        <title>Complete genome sequence of Thermus thermophilus HB8.</title>
        <authorList>
            <person name="Masui R."/>
            <person name="Kurokawa K."/>
            <person name="Nakagawa N."/>
            <person name="Tokunaga F."/>
            <person name="Koyama Y."/>
            <person name="Shibata T."/>
            <person name="Oshima T."/>
            <person name="Yokoyama S."/>
            <person name="Yasunaga T."/>
            <person name="Kuramitsu S."/>
        </authorList>
    </citation>
    <scope>NUCLEOTIDE SEQUENCE [LARGE SCALE GENOMIC DNA]</scope>
    <source>
        <strain>ATCC 27634 / DSM 579 / HB8</strain>
    </source>
</reference>
<reference key="2">
    <citation type="submission" date="2009-02" db="PDB data bank">
        <title>Crystal structure of TT1467 from Thermus thermophilus HB8.</title>
        <authorList>
            <consortium name="RIKEN structural genomics initiative (RSGI)"/>
        </authorList>
    </citation>
    <scope>X-RAY CRYSTALLOGRAPHY (2.20 ANGSTROMS)</scope>
    <source>
        <strain>ATCC 27634 / DSM 579 / HB8</strain>
    </source>
</reference>
<reference key="3">
    <citation type="journal article" date="2011" name="J. Biol. Chem.">
        <title>Thermus thermophilus glycoside hydrolase family 57 branching enzyme: crystal structure, mechanism of action, and products formed.</title>
        <authorList>
            <person name="Palomo M."/>
            <person name="Pijning T."/>
            <person name="Booiman T."/>
            <person name="Dobruchowska J.M."/>
            <person name="van der Vlist J."/>
            <person name="Kralj S."/>
            <person name="Planas A."/>
            <person name="Loos K."/>
            <person name="Kamerling J.P."/>
            <person name="Dijkstra B.W."/>
            <person name="van der Maarel M.J."/>
            <person name="Dijkhuizen L."/>
            <person name="Leemhuis H."/>
        </authorList>
    </citation>
    <scope>X-RAY CRYSTALLOGRAPHY (1.35 ANGSTROMS)</scope>
    <scope>FUNCTION</scope>
    <scope>CATALYTIC ACTIVITY</scope>
    <scope>SUBSTRATE SPECIFICITY</scope>
    <scope>BIOPHYSICOCHEMICAL PROPERTIES</scope>
    <scope>PATHWAY</scope>
    <scope>MUTAGENESIS OF PHE-23; GLU-184; TYR-236; LEU-271; TRP-274; ASP-353; TRP-360; TRP-404 AND PHE-463</scope>
    <source>
        <strain>ATCC 27634 / DSM 579 / HB8</strain>
    </source>
</reference>
<evidence type="ECO:0000250" key="1"/>
<evidence type="ECO:0000269" key="2">
    <source>
    </source>
</evidence>
<evidence type="ECO:0000305" key="3"/>
<evidence type="ECO:0007829" key="4">
    <source>
        <dbReference type="PDB" id="3P0B"/>
    </source>
</evidence>
<accession>Q5SH28</accession>
<accession>P84162</accession>
<sequence>MARFALVLHAHLPYVRAHGMWPFGEETLYEAMAETYLPLIRVLERLRAEGVEAPFTLGITPILAEQLADARIKEGFWAYAKDRLERAQGDYQRYRGTALEASARHQVAFWELTLDHFQRLSGDLVAAFRKAEEGGQVELITSNATHGYSPLLGYDEALWAQIKTGVSTYRRHFAKDPTGFWLPEMAYRPKGPWKPPVEGPPEGVRPGVDELLMRAGIRYTFVDAHLVQGGEPLSPYGEAALGPVESQEATYHVHELESGLRVLARNPETTLQVWSADYGYPGEGLYREFHRKDPLSGLHHWRVTHRKADLAEKAPYDPEAAFAKTEEHARHFVGLLERLAGRHPEGVILSPYDAELFGHWWYEGVAWLEAVLRLLAQNPKVRPVTAREAVQGPAVRTALPEGSWGRGGDHRVWLNEKTLDYWEKVYRAEGAMREAARRGVLPEGVLRQAMRELLLLEASDWPFLMETGQAEAYARERYEEHARAFFHLLKGASPEELRALEERDNPFPEADPRLYLFREA</sequence>
<protein>
    <recommendedName>
        <fullName>1,4-alpha-glucan branching enzyme TTHA1902</fullName>
        <ecNumber>2.4.1.18</ecNumber>
    </recommendedName>
    <alternativeName>
        <fullName>1,4-alpha-D-glucan:1,4-alpha-D-glucan 6-glucosyl-transferase</fullName>
    </alternativeName>
    <alternativeName>
        <fullName>Alpha-(1-&gt;4)-glucan branching enzyme</fullName>
    </alternativeName>
    <alternativeName>
        <fullName>Branching enzyme</fullName>
        <shortName>BE</shortName>
    </alternativeName>
</protein>